<organism>
    <name type="scientific">Campylobacter jejuni subsp. jejuni serotype O:6 (strain 81116 / NCTC 11828)</name>
    <dbReference type="NCBI Taxonomy" id="407148"/>
    <lineage>
        <taxon>Bacteria</taxon>
        <taxon>Pseudomonadati</taxon>
        <taxon>Campylobacterota</taxon>
        <taxon>Epsilonproteobacteria</taxon>
        <taxon>Campylobacterales</taxon>
        <taxon>Campylobacteraceae</taxon>
        <taxon>Campylobacter</taxon>
    </lineage>
</organism>
<gene>
    <name evidence="1" type="primary">tal</name>
    <name type="ordered locus">C8J_0257</name>
</gene>
<protein>
    <recommendedName>
        <fullName evidence="1">Transaldolase</fullName>
        <ecNumber evidence="1">2.2.1.2</ecNumber>
    </recommendedName>
</protein>
<dbReference type="EC" id="2.2.1.2" evidence="1"/>
<dbReference type="EMBL" id="CP000814">
    <property type="protein sequence ID" value="ABV51856.1"/>
    <property type="molecule type" value="Genomic_DNA"/>
</dbReference>
<dbReference type="RefSeq" id="WP_002877809.1">
    <property type="nucleotide sequence ID" value="NC_009839.1"/>
</dbReference>
<dbReference type="SMR" id="A8FK69"/>
<dbReference type="KEGG" id="cju:C8J_0257"/>
<dbReference type="HOGENOM" id="CLU_050771_1_0_7"/>
<dbReference type="UniPathway" id="UPA00115">
    <property type="reaction ID" value="UER00414"/>
</dbReference>
<dbReference type="GO" id="GO:0005737">
    <property type="term" value="C:cytoplasm"/>
    <property type="evidence" value="ECO:0007669"/>
    <property type="project" value="UniProtKB-SubCell"/>
</dbReference>
<dbReference type="GO" id="GO:0004801">
    <property type="term" value="F:transaldolase activity"/>
    <property type="evidence" value="ECO:0007669"/>
    <property type="project" value="UniProtKB-UniRule"/>
</dbReference>
<dbReference type="GO" id="GO:0005975">
    <property type="term" value="P:carbohydrate metabolic process"/>
    <property type="evidence" value="ECO:0007669"/>
    <property type="project" value="InterPro"/>
</dbReference>
<dbReference type="GO" id="GO:0006098">
    <property type="term" value="P:pentose-phosphate shunt"/>
    <property type="evidence" value="ECO:0007669"/>
    <property type="project" value="UniProtKB-UniRule"/>
</dbReference>
<dbReference type="CDD" id="cd00955">
    <property type="entry name" value="Transaldolase_like"/>
    <property type="match status" value="1"/>
</dbReference>
<dbReference type="Gene3D" id="3.20.20.70">
    <property type="entry name" value="Aldolase class I"/>
    <property type="match status" value="1"/>
</dbReference>
<dbReference type="HAMAP" id="MF_00493">
    <property type="entry name" value="Transaldolase_2"/>
    <property type="match status" value="1"/>
</dbReference>
<dbReference type="InterPro" id="IPR013785">
    <property type="entry name" value="Aldolase_TIM"/>
</dbReference>
<dbReference type="InterPro" id="IPR001585">
    <property type="entry name" value="TAL/FSA"/>
</dbReference>
<dbReference type="InterPro" id="IPR004732">
    <property type="entry name" value="Transaldolase_2"/>
</dbReference>
<dbReference type="InterPro" id="IPR018225">
    <property type="entry name" value="Transaldolase_AS"/>
</dbReference>
<dbReference type="NCBIfam" id="NF003026">
    <property type="entry name" value="PRK03903.1"/>
    <property type="match status" value="1"/>
</dbReference>
<dbReference type="NCBIfam" id="TIGR00876">
    <property type="entry name" value="tal_mycobact"/>
    <property type="match status" value="1"/>
</dbReference>
<dbReference type="PANTHER" id="PTHR10683">
    <property type="entry name" value="TRANSALDOLASE"/>
    <property type="match status" value="1"/>
</dbReference>
<dbReference type="PANTHER" id="PTHR10683:SF31">
    <property type="entry name" value="TRANSALDOLASE"/>
    <property type="match status" value="1"/>
</dbReference>
<dbReference type="Pfam" id="PF00923">
    <property type="entry name" value="TAL_FSA"/>
    <property type="match status" value="1"/>
</dbReference>
<dbReference type="PIRSF" id="PIRSF036915">
    <property type="entry name" value="Trnald_Bac_Plnt"/>
    <property type="match status" value="1"/>
</dbReference>
<dbReference type="SUPFAM" id="SSF51569">
    <property type="entry name" value="Aldolase"/>
    <property type="match status" value="1"/>
</dbReference>
<dbReference type="PROSITE" id="PS01054">
    <property type="entry name" value="TRANSALDOLASE_1"/>
    <property type="match status" value="1"/>
</dbReference>
<evidence type="ECO:0000255" key="1">
    <source>
        <dbReference type="HAMAP-Rule" id="MF_00493"/>
    </source>
</evidence>
<proteinExistence type="inferred from homology"/>
<accession>A8FK69</accession>
<sequence>MKNFSLWCDFIENSFLDNEFLNLLSHGINGATSNPAIFKNAILNSPIYKDKILKLKGKRTKDIYEELAISDIQKAADKLAPLFYQKNDGFISIEIDPRLHDNTTLSLGEAKRLYSAISKENVMIKIPATKASYEVMYELMKNGISVNATLIFSLEQSQKCFEALNAGLVEFRKNNIALKEQNTRTPQAVISIFVSRFDRLLNPKAKEQNRIGILNANLAYNNIYSKNEPNIRALFASTGVKGDDLPKDYYIKELLFENSVNTAPLDAIEAFKGKMDFKKPLMNFEIYTELNQIISQSEREKACNDLLSDGIEQFCIAFEDILKAL</sequence>
<feature type="chain" id="PRO_1000072429" description="Transaldolase">
    <location>
        <begin position="1"/>
        <end position="325"/>
    </location>
</feature>
<feature type="active site" description="Schiff-base intermediate with substrate" evidence="1">
    <location>
        <position position="125"/>
    </location>
</feature>
<name>TAL_CAMJ8</name>
<reference key="1">
    <citation type="journal article" date="2007" name="J. Bacteriol.">
        <title>The complete genome sequence of Campylobacter jejuni strain 81116 (NCTC11828).</title>
        <authorList>
            <person name="Pearson B.M."/>
            <person name="Gaskin D.J.H."/>
            <person name="Segers R.P.A.M."/>
            <person name="Wells J.M."/>
            <person name="Nuijten P.J.M."/>
            <person name="van Vliet A.H.M."/>
        </authorList>
    </citation>
    <scope>NUCLEOTIDE SEQUENCE [LARGE SCALE GENOMIC DNA]</scope>
    <source>
        <strain>81116 / NCTC 11828</strain>
    </source>
</reference>
<keyword id="KW-0963">Cytoplasm</keyword>
<keyword id="KW-0570">Pentose shunt</keyword>
<keyword id="KW-0704">Schiff base</keyword>
<keyword id="KW-0808">Transferase</keyword>
<comment type="function">
    <text evidence="1">Transaldolase is important for the balance of metabolites in the pentose-phosphate pathway.</text>
</comment>
<comment type="catalytic activity">
    <reaction evidence="1">
        <text>D-sedoheptulose 7-phosphate + D-glyceraldehyde 3-phosphate = D-erythrose 4-phosphate + beta-D-fructose 6-phosphate</text>
        <dbReference type="Rhea" id="RHEA:17053"/>
        <dbReference type="ChEBI" id="CHEBI:16897"/>
        <dbReference type="ChEBI" id="CHEBI:57483"/>
        <dbReference type="ChEBI" id="CHEBI:57634"/>
        <dbReference type="ChEBI" id="CHEBI:59776"/>
        <dbReference type="EC" id="2.2.1.2"/>
    </reaction>
</comment>
<comment type="pathway">
    <text evidence="1">Carbohydrate degradation; pentose phosphate pathway; D-glyceraldehyde 3-phosphate and beta-D-fructose 6-phosphate from D-ribose 5-phosphate and D-xylulose 5-phosphate (non-oxidative stage): step 2/3.</text>
</comment>
<comment type="subcellular location">
    <subcellularLocation>
        <location evidence="1">Cytoplasm</location>
    </subcellularLocation>
</comment>
<comment type="similarity">
    <text evidence="1">Belongs to the transaldolase family. Type 2 subfamily.</text>
</comment>